<keyword id="KW-0067">ATP-binding</keyword>
<keyword id="KW-0963">Cytoplasm</keyword>
<keyword id="KW-0324">Glycolysis</keyword>
<keyword id="KW-0418">Kinase</keyword>
<keyword id="KW-0547">Nucleotide-binding</keyword>
<keyword id="KW-1185">Reference proteome</keyword>
<keyword id="KW-0808">Transferase</keyword>
<reference key="1">
    <citation type="journal article" date="2008" name="Genome Biol.">
        <title>The complete genome, comparative and functional analysis of Stenotrophomonas maltophilia reveals an organism heavily shielded by drug resistance determinants.</title>
        <authorList>
            <person name="Crossman L.C."/>
            <person name="Gould V.C."/>
            <person name="Dow J.M."/>
            <person name="Vernikos G.S."/>
            <person name="Okazaki A."/>
            <person name="Sebaihia M."/>
            <person name="Saunders D."/>
            <person name="Arrowsmith C."/>
            <person name="Carver T."/>
            <person name="Peters N."/>
            <person name="Adlem E."/>
            <person name="Kerhornou A."/>
            <person name="Lord A."/>
            <person name="Murphy L."/>
            <person name="Seeger K."/>
            <person name="Squares R."/>
            <person name="Rutter S."/>
            <person name="Quail M.A."/>
            <person name="Rajandream M.A."/>
            <person name="Harris D."/>
            <person name="Churcher C."/>
            <person name="Bentley S.D."/>
            <person name="Parkhill J."/>
            <person name="Thomson N.R."/>
            <person name="Avison M.B."/>
        </authorList>
    </citation>
    <scope>NUCLEOTIDE SEQUENCE [LARGE SCALE GENOMIC DNA]</scope>
    <source>
        <strain>K279a</strain>
    </source>
</reference>
<dbReference type="EC" id="2.7.1.2" evidence="1"/>
<dbReference type="EMBL" id="AM743169">
    <property type="protein sequence ID" value="CAQ45313.1"/>
    <property type="molecule type" value="Genomic_DNA"/>
</dbReference>
<dbReference type="RefSeq" id="WP_005412971.1">
    <property type="nucleotide sequence ID" value="NC_010943.1"/>
</dbReference>
<dbReference type="SMR" id="B2FL80"/>
<dbReference type="EnsemblBacteria" id="CAQ45313">
    <property type="protein sequence ID" value="CAQ45313"/>
    <property type="gene ID" value="Smlt1792"/>
</dbReference>
<dbReference type="KEGG" id="sml:Smlt1792"/>
<dbReference type="eggNOG" id="COG0837">
    <property type="taxonomic scope" value="Bacteria"/>
</dbReference>
<dbReference type="HOGENOM" id="CLU_042582_1_0_6"/>
<dbReference type="Proteomes" id="UP000008840">
    <property type="component" value="Chromosome"/>
</dbReference>
<dbReference type="GO" id="GO:0005829">
    <property type="term" value="C:cytosol"/>
    <property type="evidence" value="ECO:0007669"/>
    <property type="project" value="TreeGrafter"/>
</dbReference>
<dbReference type="GO" id="GO:0005524">
    <property type="term" value="F:ATP binding"/>
    <property type="evidence" value="ECO:0007669"/>
    <property type="project" value="UniProtKB-UniRule"/>
</dbReference>
<dbReference type="GO" id="GO:0005536">
    <property type="term" value="F:D-glucose binding"/>
    <property type="evidence" value="ECO:0007669"/>
    <property type="project" value="InterPro"/>
</dbReference>
<dbReference type="GO" id="GO:0004340">
    <property type="term" value="F:glucokinase activity"/>
    <property type="evidence" value="ECO:0007669"/>
    <property type="project" value="UniProtKB-UniRule"/>
</dbReference>
<dbReference type="GO" id="GO:0006096">
    <property type="term" value="P:glycolytic process"/>
    <property type="evidence" value="ECO:0007669"/>
    <property type="project" value="UniProtKB-UniRule"/>
</dbReference>
<dbReference type="CDD" id="cd24008">
    <property type="entry name" value="ASKHA_NBD_GLK"/>
    <property type="match status" value="1"/>
</dbReference>
<dbReference type="Gene3D" id="3.30.420.40">
    <property type="match status" value="1"/>
</dbReference>
<dbReference type="Gene3D" id="3.40.367.20">
    <property type="match status" value="1"/>
</dbReference>
<dbReference type="HAMAP" id="MF_00524">
    <property type="entry name" value="Glucokinase"/>
    <property type="match status" value="1"/>
</dbReference>
<dbReference type="InterPro" id="IPR043129">
    <property type="entry name" value="ATPase_NBD"/>
</dbReference>
<dbReference type="InterPro" id="IPR050201">
    <property type="entry name" value="Bacterial_glucokinase"/>
</dbReference>
<dbReference type="InterPro" id="IPR003836">
    <property type="entry name" value="Glucokinase"/>
</dbReference>
<dbReference type="NCBIfam" id="TIGR00749">
    <property type="entry name" value="glk"/>
    <property type="match status" value="1"/>
</dbReference>
<dbReference type="NCBIfam" id="NF009073">
    <property type="entry name" value="PRK12408.1"/>
    <property type="match status" value="1"/>
</dbReference>
<dbReference type="PANTHER" id="PTHR47690">
    <property type="entry name" value="GLUCOKINASE"/>
    <property type="match status" value="1"/>
</dbReference>
<dbReference type="PANTHER" id="PTHR47690:SF1">
    <property type="entry name" value="GLUCOKINASE"/>
    <property type="match status" value="1"/>
</dbReference>
<dbReference type="Pfam" id="PF02685">
    <property type="entry name" value="Glucokinase"/>
    <property type="match status" value="1"/>
</dbReference>
<dbReference type="SUPFAM" id="SSF53067">
    <property type="entry name" value="Actin-like ATPase domain"/>
    <property type="match status" value="1"/>
</dbReference>
<protein>
    <recommendedName>
        <fullName evidence="1">Glucokinase</fullName>
        <ecNumber evidence="1">2.7.1.2</ecNumber>
    </recommendedName>
    <alternativeName>
        <fullName evidence="1">Glucose kinase</fullName>
    </alternativeName>
</protein>
<comment type="catalytic activity">
    <reaction evidence="1">
        <text>D-glucose + ATP = D-glucose 6-phosphate + ADP + H(+)</text>
        <dbReference type="Rhea" id="RHEA:17825"/>
        <dbReference type="ChEBI" id="CHEBI:4167"/>
        <dbReference type="ChEBI" id="CHEBI:15378"/>
        <dbReference type="ChEBI" id="CHEBI:30616"/>
        <dbReference type="ChEBI" id="CHEBI:61548"/>
        <dbReference type="ChEBI" id="CHEBI:456216"/>
        <dbReference type="EC" id="2.7.1.2"/>
    </reaction>
</comment>
<comment type="subcellular location">
    <subcellularLocation>
        <location evidence="1">Cytoplasm</location>
    </subcellularLocation>
</comment>
<comment type="similarity">
    <text evidence="1">Belongs to the bacterial glucokinase family.</text>
</comment>
<accession>B2FL80</accession>
<proteinExistence type="inferred from homology"/>
<organism>
    <name type="scientific">Stenotrophomonas maltophilia (strain K279a)</name>
    <dbReference type="NCBI Taxonomy" id="522373"/>
    <lineage>
        <taxon>Bacteria</taxon>
        <taxon>Pseudomonadati</taxon>
        <taxon>Pseudomonadota</taxon>
        <taxon>Gammaproteobacteria</taxon>
        <taxon>Lysobacterales</taxon>
        <taxon>Lysobacteraceae</taxon>
        <taxon>Stenotrophomonas</taxon>
        <taxon>Stenotrophomonas maltophilia group</taxon>
    </lineage>
</organism>
<feature type="chain" id="PRO_1000127727" description="Glucokinase">
    <location>
        <begin position="1"/>
        <end position="335"/>
    </location>
</feature>
<feature type="binding site" evidence="1">
    <location>
        <begin position="11"/>
        <end position="16"/>
    </location>
    <ligand>
        <name>ATP</name>
        <dbReference type="ChEBI" id="CHEBI:30616"/>
    </ligand>
</feature>
<name>GLK_STRMK</name>
<sequence>MSANSQPVLVADIGGTNARFALADTSLDAPLLKESIREYAVAEFPSLGDAARHHLEQIGAAASRGVFAVAGRVDGDEARITNHPWVISRSRTAAMLGFDELHLINDFAAQAMAISLLQPEDVVQVGGAAWVPGKPGQPRNYAVIGPGTGLGVGGLILRHGRCYPLETEGGHVSFPPGTPEEIRILEILSEQFGRVSNERLICGPGLVNIHRAVCEMAGIDPGQLQPVDVTARALHGDPQAMRTVDVFCAVFGAIAGDLVLTQGAWDGVFLTGGLTPKMLDSLQHSGFRQRFEHKGRFSSIMARVPSLAVMHPHAGLLGAAAYAADAERDAPGVAA</sequence>
<gene>
    <name evidence="1" type="primary">glk</name>
    <name type="ordered locus">Smlt1792</name>
</gene>
<evidence type="ECO:0000255" key="1">
    <source>
        <dbReference type="HAMAP-Rule" id="MF_00524"/>
    </source>
</evidence>